<comment type="function">
    <text evidence="3 4 9">Possible cargo protein of a type 1 encapsulin nanocompartment involved in protection against oxidative stress (Probable). Catalyzes the conversion of 7,8-dihydroneopterin to 6-hydroxymethyl-7,8-dihydropterin, 7,8-dihydromonapterin and 7,8-dihydroxanthopterin, respectively, in equal quantities. After longer incubation times the only product is 6-hydroxymethyl-7,8-dihydropterin (PubMed:23150985, PubMed:24855650). Retains aldolase activity when encapsulated with a slight decrease in rate. It is not known if this protein is normally found in the encapsulin nanocompartment (PubMed:24855650).</text>
</comment>
<comment type="catalytic activity">
    <reaction evidence="2 3 4">
        <text>7,8-dihydroneopterin = 6-hydroxymethyl-7,8-dihydropterin + glycolaldehyde</text>
        <dbReference type="Rhea" id="RHEA:10540"/>
        <dbReference type="ChEBI" id="CHEBI:17001"/>
        <dbReference type="ChEBI" id="CHEBI:17071"/>
        <dbReference type="ChEBI" id="CHEBI:44841"/>
        <dbReference type="EC" id="4.1.2.25"/>
    </reaction>
</comment>
<comment type="catalytic activity">
    <reaction evidence="3">
        <text>7,8-dihydroneopterin = 7,8-dihydromonapterin</text>
        <dbReference type="Rhea" id="RHEA:45328"/>
        <dbReference type="ChEBI" id="CHEBI:17001"/>
        <dbReference type="ChEBI" id="CHEBI:71175"/>
        <dbReference type="EC" id="5.1.99.8"/>
    </reaction>
</comment>
<comment type="catalytic activity">
    <reaction evidence="3">
        <text>7,8-dihydroneopterin + O2 = 7,8-dihydroxanthopterin + glycolaldehyde + formate + H(+)</text>
        <dbReference type="Rhea" id="RHEA:45332"/>
        <dbReference type="ChEBI" id="CHEBI:15378"/>
        <dbReference type="ChEBI" id="CHEBI:15379"/>
        <dbReference type="ChEBI" id="CHEBI:15740"/>
        <dbReference type="ChEBI" id="CHEBI:17001"/>
        <dbReference type="ChEBI" id="CHEBI:17071"/>
        <dbReference type="ChEBI" id="CHEBI:85130"/>
        <dbReference type="EC" id="1.13.11.81"/>
    </reaction>
</comment>
<comment type="biophysicochemical properties">
    <kinetics>
        <KM evidence="3">0.165 uM for 7,8-dihydroneopterin in the aldolase reaction</KM>
        <KM evidence="3">0.154 uM for 7,8-dihydromonapterin in the aldolase reaction</KM>
        <KM evidence="3">0.154 uM for 7,8-dihydroneopterin in the epimerase reaction</KM>
        <KM evidence="3">0.154 uM for 7,8-dihydroneopterin in the oxygenase reaction</KM>
        <text evidence="3">kcat is 0.0054 sec(-1) for the aldolase reaction with 7,8-dihydroneopterin as substrate. kcat is 0.006 sec(-1) for the aldolase reaction with 7,8-dihydromonapterin as substrate. kcat is 0.0015 sec(-1) for the epimerization of 7,8-dihydroneopterin. kcat is 0.0011 sec(-1) for the oxygenation reaction of 7,8-dihydroneopterin.</text>
    </kinetics>
</comment>
<comment type="pathway">
    <text>Cofactor biosynthesis; tetrahydrofolate biosynthesis; 2-amino-4-hydroxy-6-hydroxymethyl-7,8-dihydropteridine diphosphate from 7,8-dihydroneopterin triphosphate: step 3/4.</text>
</comment>
<comment type="subunit">
    <text evidence="2 3">Homotetramer in the absence of substrate. Homooctamer in the presence of substrate.</text>
</comment>
<comment type="subcellular location">
    <subcellularLocation>
        <location evidence="4">Encapsulin nanocompartment</location>
    </subcellularLocation>
    <text evidence="9">Forms an approximately 6 nm diameter cargo inside the encapsulin nanocompartment, would be similar to the size of the homotetramer or homooctamer.</text>
</comment>
<comment type="domain">
    <text evidence="4">The C-terminus (residues 119-133) targets the protein to the encapsulin nanocompartment.</text>
</comment>
<comment type="mass spectrometry"/>
<comment type="miscellaneous">
    <text>Was identified as a high-confidence drug target.</text>
</comment>
<comment type="miscellaneous">
    <text evidence="2">Cloning (to improve crystallization) removed residues 121-133 which corresponds to the target-loading peptide for the encapsulin nanocompartment. Target peptide removal does not change enzyme activity.</text>
</comment>
<comment type="similarity">
    <text evidence="7">Belongs to the DHNA family.</text>
</comment>
<organism>
    <name type="scientific">Mycobacterium tuberculosis (strain ATCC 25618 / H37Rv)</name>
    <dbReference type="NCBI Taxonomy" id="83332"/>
    <lineage>
        <taxon>Bacteria</taxon>
        <taxon>Bacillati</taxon>
        <taxon>Actinomycetota</taxon>
        <taxon>Actinomycetes</taxon>
        <taxon>Mycobacteriales</taxon>
        <taxon>Mycobacteriaceae</taxon>
        <taxon>Mycobacterium</taxon>
        <taxon>Mycobacterium tuberculosis complex</taxon>
    </lineage>
</organism>
<dbReference type="EC" id="4.1.2.25" evidence="2 3 4"/>
<dbReference type="EC" id="5.1.99.8" evidence="3"/>
<dbReference type="EC" id="1.13.11.81" evidence="3"/>
<dbReference type="EMBL" id="AL123456">
    <property type="protein sequence ID" value="CCP46430.1"/>
    <property type="molecule type" value="Genomic_DNA"/>
</dbReference>
<dbReference type="PIR" id="H70955">
    <property type="entry name" value="H70955"/>
</dbReference>
<dbReference type="RefSeq" id="WP_003419537.1">
    <property type="nucleotide sequence ID" value="NZ_NVQJ01000056.1"/>
</dbReference>
<dbReference type="RefSeq" id="YP_177996.1">
    <property type="nucleotide sequence ID" value="NC_000962.3"/>
</dbReference>
<dbReference type="PDB" id="1NBU">
    <property type="method" value="X-ray"/>
    <property type="resolution" value="1.60 A"/>
    <property type="chains" value="A/B/C/D/E/F/G/H=1-119"/>
</dbReference>
<dbReference type="PDB" id="1Z9W">
    <property type="method" value="X-ray"/>
    <property type="resolution" value="2.50 A"/>
    <property type="chains" value="A=1-133"/>
</dbReference>
<dbReference type="PDBsum" id="1NBU"/>
<dbReference type="PDBsum" id="1Z9W"/>
<dbReference type="SMR" id="P9WNC5"/>
<dbReference type="FunCoup" id="P9WNC5">
    <property type="interactions" value="165"/>
</dbReference>
<dbReference type="STRING" id="83332.Rv3607c"/>
<dbReference type="PaxDb" id="83332-Rv3607c"/>
<dbReference type="DNASU" id="885345"/>
<dbReference type="GeneID" id="45427593"/>
<dbReference type="GeneID" id="885345"/>
<dbReference type="KEGG" id="mtu:Rv3607c"/>
<dbReference type="KEGG" id="mtv:RVBD_3607c"/>
<dbReference type="TubercuList" id="Rv3607c"/>
<dbReference type="eggNOG" id="COG1539">
    <property type="taxonomic scope" value="Bacteria"/>
</dbReference>
<dbReference type="InParanoid" id="P9WNC5"/>
<dbReference type="OrthoDB" id="3212934at2"/>
<dbReference type="PhylomeDB" id="P9WNC5"/>
<dbReference type="BRENDA" id="1.13.11.81">
    <property type="organism ID" value="3445"/>
</dbReference>
<dbReference type="BRENDA" id="4.1.2.25">
    <property type="organism ID" value="3445"/>
</dbReference>
<dbReference type="UniPathway" id="UPA00077">
    <property type="reaction ID" value="UER00154"/>
</dbReference>
<dbReference type="EvolutionaryTrace" id="P9WNC5"/>
<dbReference type="Proteomes" id="UP000001584">
    <property type="component" value="Chromosome"/>
</dbReference>
<dbReference type="GO" id="GO:0005737">
    <property type="term" value="C:cytoplasm"/>
    <property type="evidence" value="ECO:0000318"/>
    <property type="project" value="GO_Central"/>
</dbReference>
<dbReference type="GO" id="GO:0140737">
    <property type="term" value="C:encapsulin nanocompartment"/>
    <property type="evidence" value="ECO:0007669"/>
    <property type="project" value="UniProtKB-SubCell"/>
</dbReference>
<dbReference type="GO" id="GO:0004150">
    <property type="term" value="F:dihydroneopterin aldolase activity"/>
    <property type="evidence" value="ECO:0000318"/>
    <property type="project" value="GO_Central"/>
</dbReference>
<dbReference type="GO" id="GO:0016853">
    <property type="term" value="F:isomerase activity"/>
    <property type="evidence" value="ECO:0007669"/>
    <property type="project" value="UniProtKB-KW"/>
</dbReference>
<dbReference type="GO" id="GO:0016491">
    <property type="term" value="F:oxidoreductase activity"/>
    <property type="evidence" value="ECO:0007669"/>
    <property type="project" value="UniProtKB-KW"/>
</dbReference>
<dbReference type="GO" id="GO:0046656">
    <property type="term" value="P:folic acid biosynthetic process"/>
    <property type="evidence" value="ECO:0007669"/>
    <property type="project" value="UniProtKB-KW"/>
</dbReference>
<dbReference type="GO" id="GO:0046654">
    <property type="term" value="P:tetrahydrofolate biosynthetic process"/>
    <property type="evidence" value="ECO:0007669"/>
    <property type="project" value="UniProtKB-UniPathway"/>
</dbReference>
<dbReference type="CDD" id="cd00534">
    <property type="entry name" value="DHNA_DHNTPE"/>
    <property type="match status" value="1"/>
</dbReference>
<dbReference type="FunFam" id="3.30.1130.10:FF:000003">
    <property type="entry name" value="7,8-dihydroneopterin aldolase"/>
    <property type="match status" value="1"/>
</dbReference>
<dbReference type="Gene3D" id="3.30.1130.10">
    <property type="match status" value="1"/>
</dbReference>
<dbReference type="InterPro" id="IPR006156">
    <property type="entry name" value="Dihydroneopterin_aldolase"/>
</dbReference>
<dbReference type="InterPro" id="IPR006157">
    <property type="entry name" value="FolB_dom"/>
</dbReference>
<dbReference type="InterPro" id="IPR043133">
    <property type="entry name" value="GTP-CH-I_C/QueF"/>
</dbReference>
<dbReference type="NCBIfam" id="TIGR00525">
    <property type="entry name" value="folB"/>
    <property type="match status" value="1"/>
</dbReference>
<dbReference type="NCBIfam" id="TIGR00526">
    <property type="entry name" value="folB_dom"/>
    <property type="match status" value="1"/>
</dbReference>
<dbReference type="PANTHER" id="PTHR42844">
    <property type="entry name" value="DIHYDRONEOPTERIN ALDOLASE 1-RELATED"/>
    <property type="match status" value="1"/>
</dbReference>
<dbReference type="PANTHER" id="PTHR42844:SF1">
    <property type="entry name" value="DIHYDRONEOPTERIN ALDOLASE 1-RELATED"/>
    <property type="match status" value="1"/>
</dbReference>
<dbReference type="Pfam" id="PF02152">
    <property type="entry name" value="FolB"/>
    <property type="match status" value="1"/>
</dbReference>
<dbReference type="SMART" id="SM00905">
    <property type="entry name" value="FolB"/>
    <property type="match status" value="1"/>
</dbReference>
<dbReference type="SUPFAM" id="SSF55620">
    <property type="entry name" value="Tetrahydrobiopterin biosynthesis enzymes-like"/>
    <property type="match status" value="1"/>
</dbReference>
<sequence>MADRIELRGLTVHGRHGVYDHERVAGQRFVIDVTVWIDLAEAANSDDLADTYDYVRLASRAAEIVAGPPRKLIETVGAEIADHVMDDQRVHAVEVAVHKPQAPIPQTFDDVAVVIRRSRRGGRGWVVPAGGAV</sequence>
<evidence type="ECO:0000250" key="1">
    <source>
        <dbReference type="UniProtKB" id="P56740"/>
    </source>
</evidence>
<evidence type="ECO:0000269" key="2">
    <source>
    </source>
</evidence>
<evidence type="ECO:0000269" key="3">
    <source>
    </source>
</evidence>
<evidence type="ECO:0000269" key="4">
    <source>
    </source>
</evidence>
<evidence type="ECO:0000303" key="5">
    <source>
    </source>
</evidence>
<evidence type="ECO:0000303" key="6">
    <source>
    </source>
</evidence>
<evidence type="ECO:0000305" key="7"/>
<evidence type="ECO:0000305" key="8">
    <source>
    </source>
</evidence>
<evidence type="ECO:0000305" key="9">
    <source>
    </source>
</evidence>
<evidence type="ECO:0007744" key="10">
    <source>
        <dbReference type="PDB" id="1NBU"/>
    </source>
</evidence>
<evidence type="ECO:0007744" key="11">
    <source>
        <dbReference type="PDB" id="1Z9W"/>
    </source>
</evidence>
<evidence type="ECO:0007829" key="12">
    <source>
        <dbReference type="PDB" id="1NBU"/>
    </source>
</evidence>
<evidence type="ECO:0007829" key="13">
    <source>
        <dbReference type="PDB" id="1Z9W"/>
    </source>
</evidence>
<proteinExistence type="evidence at protein level"/>
<gene>
    <name evidence="5" type="primary">folB</name>
    <name type="ordered locus">Rv3607c</name>
    <name type="ORF">MTCY07H7B.15</name>
</gene>
<reference key="1">
    <citation type="journal article" date="1998" name="Nature">
        <title>Deciphering the biology of Mycobacterium tuberculosis from the complete genome sequence.</title>
        <authorList>
            <person name="Cole S.T."/>
            <person name="Brosch R."/>
            <person name="Parkhill J."/>
            <person name="Garnier T."/>
            <person name="Churcher C.M."/>
            <person name="Harris D.E."/>
            <person name="Gordon S.V."/>
            <person name="Eiglmeier K."/>
            <person name="Gas S."/>
            <person name="Barry C.E. III"/>
            <person name="Tekaia F."/>
            <person name="Badcock K."/>
            <person name="Basham D."/>
            <person name="Brown D."/>
            <person name="Chillingworth T."/>
            <person name="Connor R."/>
            <person name="Davies R.M."/>
            <person name="Devlin K."/>
            <person name="Feltwell T."/>
            <person name="Gentles S."/>
            <person name="Hamlin N."/>
            <person name="Holroyd S."/>
            <person name="Hornsby T."/>
            <person name="Jagels K."/>
            <person name="Krogh A."/>
            <person name="McLean J."/>
            <person name="Moule S."/>
            <person name="Murphy L.D."/>
            <person name="Oliver S."/>
            <person name="Osborne J."/>
            <person name="Quail M.A."/>
            <person name="Rajandream M.A."/>
            <person name="Rogers J."/>
            <person name="Rutter S."/>
            <person name="Seeger K."/>
            <person name="Skelton S."/>
            <person name="Squares S."/>
            <person name="Squares R."/>
            <person name="Sulston J.E."/>
            <person name="Taylor K."/>
            <person name="Whitehead S."/>
            <person name="Barrell B.G."/>
        </authorList>
    </citation>
    <scope>NUCLEOTIDE SEQUENCE [LARGE SCALE GENOMIC DNA]</scope>
    <source>
        <strain>ATCC 25618 / H37Rv</strain>
    </source>
</reference>
<reference key="2">
    <citation type="journal article" date="2008" name="BMC Syst. Biol.">
        <title>targetTB: a target identification pipeline for Mycobacterium tuberculosis through an interactome, reactome and genome-scale structural analysis.</title>
        <authorList>
            <person name="Raman K."/>
            <person name="Yeturu K."/>
            <person name="Chandra N."/>
        </authorList>
    </citation>
    <scope>IDENTIFICATION AS A DRUG TARGET [LARGE SCALE ANALYSIS]</scope>
</reference>
<reference key="3">
    <citation type="journal article" date="2011" name="Mol. Cell. Proteomics">
        <title>Proteogenomic analysis of Mycobacterium tuberculosis by high resolution mass spectrometry.</title>
        <authorList>
            <person name="Kelkar D.S."/>
            <person name="Kumar D."/>
            <person name="Kumar P."/>
            <person name="Balakrishnan L."/>
            <person name="Muthusamy B."/>
            <person name="Yadav A.K."/>
            <person name="Shrivastava P."/>
            <person name="Marimuthu A."/>
            <person name="Anand S."/>
            <person name="Sundaram H."/>
            <person name="Kingsbury R."/>
            <person name="Harsha H.C."/>
            <person name="Nair B."/>
            <person name="Prasad T.S."/>
            <person name="Chauhan D.S."/>
            <person name="Katoch K."/>
            <person name="Katoch V.M."/>
            <person name="Kumar P."/>
            <person name="Chaerkady R."/>
            <person name="Ramachandran S."/>
            <person name="Dash D."/>
            <person name="Pandey A."/>
        </authorList>
    </citation>
    <scope>IDENTIFICATION BY MASS SPECTROMETRY [LARGE SCALE ANALYSIS]</scope>
    <source>
        <strain>ATCC 25618 / H37Rv</strain>
    </source>
</reference>
<reference key="4">
    <citation type="journal article" date="2012" name="J. Am. Chem. Soc.">
        <title>One substrate, five products: reactions catalyzed by the dihydroneopterin aldolase from Mycobacterium tuberculosis.</title>
        <authorList>
            <person name="Czekster C.M."/>
            <person name="Blanchard J.S."/>
        </authorList>
    </citation>
    <scope>FUNCTION</scope>
    <scope>CATALYTIC ACTIVITY</scope>
    <scope>SUBUNIT</scope>
    <scope>MASS SPECTROMETRY</scope>
    <scope>BIOPHYSICOCHEMICAL PROPERTIES</scope>
</reference>
<reference key="5">
    <citation type="journal article" date="2014" name="J. Biol. Chem.">
        <title>Characterization of a Mycobacterium tuberculosis nanocompartment and its potential cargo proteins.</title>
        <authorList>
            <person name="Contreras H."/>
            <person name="Joens M.S."/>
            <person name="McMath L.M."/>
            <person name="Le V.P."/>
            <person name="Tullius M.V."/>
            <person name="Kimmey J.M."/>
            <person name="Bionghi N."/>
            <person name="Horwitz M.A."/>
            <person name="Fitzpatrick J.A."/>
            <person name="Goulding C.W."/>
        </authorList>
    </citation>
    <scope>FUNCTION</scope>
    <scope>CATALYTIC ACTIVITY</scope>
    <scope>SUBCELLULAR LOCATION</scope>
    <scope>DOMAIN</scope>
    <scope>MUTAGENESIS OF 118-SER--VAL-133</scope>
    <source>
        <strain>H37Rv</strain>
    </source>
</reference>
<reference evidence="10 11" key="6">
    <citation type="journal article" date="2005" name="J. Mol. Biol.">
        <title>Regulation by oligomerization in a mycobacterial folate biosynthetic enzyme.</title>
        <authorList>
            <person name="Goulding C.W."/>
            <person name="Apostol M.I."/>
            <person name="Sawaya M.R."/>
            <person name="Phillips M."/>
            <person name="Parseghian A."/>
            <person name="Eisenberg D."/>
        </authorList>
    </citation>
    <scope>X-RAY CRYSTALLOGRAPHY (1.60 ANGSTROMS) OF 1-119 OF APOENZYME AND IN COMPLEX WITH 6-HYDROXYMETHYL-7,8-DIHYDROPTERIN</scope>
    <scope>FUNCTION</scope>
    <scope>CATALYTIC ACTIVITY</scope>
    <scope>SUBUNIT</scope>
</reference>
<accession>P9WNC5</accession>
<accession>L0TG79</accession>
<accession>O06275</accession>
<accession>P0A580</accession>
<name>FOLB_MYCTU</name>
<keyword id="KW-0002">3D-structure</keyword>
<keyword id="KW-1284">Encapsulin nanocompartment</keyword>
<keyword id="KW-0289">Folate biosynthesis</keyword>
<keyword id="KW-0413">Isomerase</keyword>
<keyword id="KW-0456">Lyase</keyword>
<keyword id="KW-0560">Oxidoreductase</keyword>
<keyword id="KW-1185">Reference proteome</keyword>
<protein>
    <recommendedName>
        <fullName evidence="6">Dihydroneopterin aldolase</fullName>
        <shortName evidence="6">DHNA</shortName>
        <ecNumber evidence="2 3 4">4.1.2.25</ecNumber>
    </recommendedName>
    <alternativeName>
        <fullName>7,8-dihydroneopterin 2'-epimerase</fullName>
    </alternativeName>
    <alternativeName>
        <fullName evidence="5">7,8-dihydroneopterin aldolase</fullName>
    </alternativeName>
    <alternativeName>
        <fullName>7,8-dihydroneopterin epimerase</fullName>
        <ecNumber evidence="3">5.1.99.8</ecNumber>
    </alternativeName>
    <alternativeName>
        <fullName>7,8-dihydroneopterin hydroxylase</fullName>
        <ecNumber evidence="3">1.13.11.81</ecNumber>
    </alternativeName>
    <alternativeName>
        <fullName>Dihydroneopterin epimerase</fullName>
    </alternativeName>
    <alternativeName>
        <fullName>Dihydroneopterin hydroxylase</fullName>
    </alternativeName>
</protein>
<feature type="chain" id="PRO_0000168275" description="Dihydroneopterin aldolase">
    <location>
        <begin position="1"/>
        <end position="133"/>
    </location>
</feature>
<feature type="region of interest" description="Targeting peptide" evidence="4">
    <location>
        <begin position="119"/>
        <end position="133"/>
    </location>
</feature>
<feature type="active site" description="Proton donor/acceptor" evidence="1 7">
    <location>
        <position position="99"/>
    </location>
</feature>
<feature type="binding site" evidence="8 10">
    <location>
        <position position="22"/>
    </location>
    <ligand>
        <name>substrate</name>
    </ligand>
</feature>
<feature type="binding site" evidence="8 10">
    <location>
        <position position="54"/>
    </location>
    <ligand>
        <name>substrate</name>
    </ligand>
</feature>
<feature type="binding site" evidence="8 10">
    <location>
        <begin position="73"/>
        <end position="74"/>
    </location>
    <ligand>
        <name>substrate</name>
    </ligand>
</feature>
<feature type="mutagenesis site" description="Protein no longer targeted to encapsulin nanocompartments." evidence="4">
    <location>
        <begin position="118"/>
        <end position="133"/>
    </location>
</feature>
<feature type="strand" evidence="12">
    <location>
        <begin position="4"/>
        <end position="14"/>
    </location>
</feature>
<feature type="helix" evidence="12">
    <location>
        <begin position="22"/>
        <end position="25"/>
    </location>
</feature>
<feature type="strand" evidence="12">
    <location>
        <begin position="27"/>
        <end position="36"/>
    </location>
</feature>
<feature type="helix" evidence="12">
    <location>
        <begin position="40"/>
        <end position="45"/>
    </location>
</feature>
<feature type="helix" evidence="12">
    <location>
        <begin position="48"/>
        <end position="50"/>
    </location>
</feature>
<feature type="helix" evidence="12">
    <location>
        <begin position="54"/>
        <end position="66"/>
    </location>
</feature>
<feature type="strand" evidence="13">
    <location>
        <begin position="67"/>
        <end position="69"/>
    </location>
</feature>
<feature type="helix" evidence="12">
    <location>
        <begin position="73"/>
        <end position="85"/>
    </location>
</feature>
<feature type="strand" evidence="12">
    <location>
        <begin position="92"/>
        <end position="98"/>
    </location>
</feature>
<feature type="strand" evidence="12">
    <location>
        <begin position="105"/>
        <end position="107"/>
    </location>
</feature>
<feature type="strand" evidence="12">
    <location>
        <begin position="109"/>
        <end position="118"/>
    </location>
</feature>